<comment type="function">
    <text evidence="1">Chaperone involved in the maturation of iron-sulfur cluster-containing proteins. Has a low intrinsic ATPase activity which is markedly stimulated by HscB. Involved in the maturation of IscU.</text>
</comment>
<comment type="similarity">
    <text evidence="1">Belongs to the heat shock protein 70 family.</text>
</comment>
<keyword id="KW-0067">ATP-binding</keyword>
<keyword id="KW-0143">Chaperone</keyword>
<keyword id="KW-0547">Nucleotide-binding</keyword>
<reference key="1">
    <citation type="journal article" date="2006" name="PLoS Genet.">
        <title>The complete genome sequence and comparative genome analysis of the high pathogenicity Yersinia enterocolitica strain 8081.</title>
        <authorList>
            <person name="Thomson N.R."/>
            <person name="Howard S."/>
            <person name="Wren B.W."/>
            <person name="Holden M.T.G."/>
            <person name="Crossman L."/>
            <person name="Challis G.L."/>
            <person name="Churcher C."/>
            <person name="Mungall K."/>
            <person name="Brooks K."/>
            <person name="Chillingworth T."/>
            <person name="Feltwell T."/>
            <person name="Abdellah Z."/>
            <person name="Hauser H."/>
            <person name="Jagels K."/>
            <person name="Maddison M."/>
            <person name="Moule S."/>
            <person name="Sanders M."/>
            <person name="Whitehead S."/>
            <person name="Quail M.A."/>
            <person name="Dougan G."/>
            <person name="Parkhill J."/>
            <person name="Prentice M.B."/>
        </authorList>
    </citation>
    <scope>NUCLEOTIDE SEQUENCE [LARGE SCALE GENOMIC DNA]</scope>
    <source>
        <strain>NCTC 13174 / 8081</strain>
    </source>
</reference>
<gene>
    <name evidence="1" type="primary">hscA</name>
    <name type="ordered locus">YE1061</name>
</gene>
<dbReference type="EMBL" id="AM286415">
    <property type="protein sequence ID" value="CAL11158.1"/>
    <property type="molecule type" value="Genomic_DNA"/>
</dbReference>
<dbReference type="RefSeq" id="WP_005172623.1">
    <property type="nucleotide sequence ID" value="NC_008800.1"/>
</dbReference>
<dbReference type="RefSeq" id="YP_001005393.1">
    <property type="nucleotide sequence ID" value="NC_008800.1"/>
</dbReference>
<dbReference type="SMR" id="A1JKQ7"/>
<dbReference type="KEGG" id="yen:YE1061"/>
<dbReference type="PATRIC" id="fig|393305.7.peg.1157"/>
<dbReference type="eggNOG" id="COG0443">
    <property type="taxonomic scope" value="Bacteria"/>
</dbReference>
<dbReference type="HOGENOM" id="CLU_005965_2_1_6"/>
<dbReference type="OrthoDB" id="9766019at2"/>
<dbReference type="Proteomes" id="UP000000642">
    <property type="component" value="Chromosome"/>
</dbReference>
<dbReference type="GO" id="GO:0005524">
    <property type="term" value="F:ATP binding"/>
    <property type="evidence" value="ECO:0007669"/>
    <property type="project" value="UniProtKB-KW"/>
</dbReference>
<dbReference type="GO" id="GO:0016887">
    <property type="term" value="F:ATP hydrolysis activity"/>
    <property type="evidence" value="ECO:0007669"/>
    <property type="project" value="UniProtKB-UniRule"/>
</dbReference>
<dbReference type="GO" id="GO:0140662">
    <property type="term" value="F:ATP-dependent protein folding chaperone"/>
    <property type="evidence" value="ECO:0007669"/>
    <property type="project" value="InterPro"/>
</dbReference>
<dbReference type="GO" id="GO:0051082">
    <property type="term" value="F:unfolded protein binding"/>
    <property type="evidence" value="ECO:0007669"/>
    <property type="project" value="InterPro"/>
</dbReference>
<dbReference type="GO" id="GO:0016226">
    <property type="term" value="P:iron-sulfur cluster assembly"/>
    <property type="evidence" value="ECO:0007669"/>
    <property type="project" value="InterPro"/>
</dbReference>
<dbReference type="CDD" id="cd10236">
    <property type="entry name" value="ASKHA_NBD_HSP70_HscA"/>
    <property type="match status" value="1"/>
</dbReference>
<dbReference type="FunFam" id="3.30.420.40:FF:000046">
    <property type="entry name" value="Chaperone protein HscA"/>
    <property type="match status" value="1"/>
</dbReference>
<dbReference type="FunFam" id="3.90.640.10:FF:000013">
    <property type="entry name" value="Chaperone protein HscA"/>
    <property type="match status" value="1"/>
</dbReference>
<dbReference type="FunFam" id="2.60.34.10:FF:000005">
    <property type="entry name" value="Chaperone protein HscA homolog"/>
    <property type="match status" value="1"/>
</dbReference>
<dbReference type="FunFam" id="3.30.420.40:FF:000020">
    <property type="entry name" value="Chaperone protein HscA homolog"/>
    <property type="match status" value="1"/>
</dbReference>
<dbReference type="Gene3D" id="1.20.1270.10">
    <property type="match status" value="1"/>
</dbReference>
<dbReference type="Gene3D" id="3.30.420.40">
    <property type="match status" value="2"/>
</dbReference>
<dbReference type="Gene3D" id="3.90.640.10">
    <property type="entry name" value="Actin, Chain A, domain 4"/>
    <property type="match status" value="1"/>
</dbReference>
<dbReference type="Gene3D" id="2.60.34.10">
    <property type="entry name" value="Substrate Binding Domain Of DNAk, Chain A, domain 1"/>
    <property type="match status" value="1"/>
</dbReference>
<dbReference type="HAMAP" id="MF_00679">
    <property type="entry name" value="HscA"/>
    <property type="match status" value="1"/>
</dbReference>
<dbReference type="InterPro" id="IPR043129">
    <property type="entry name" value="ATPase_NBD"/>
</dbReference>
<dbReference type="InterPro" id="IPR018181">
    <property type="entry name" value="Heat_shock_70_CS"/>
</dbReference>
<dbReference type="InterPro" id="IPR042039">
    <property type="entry name" value="HscA_NBD"/>
</dbReference>
<dbReference type="InterPro" id="IPR029048">
    <property type="entry name" value="HSP70_C_sf"/>
</dbReference>
<dbReference type="InterPro" id="IPR029047">
    <property type="entry name" value="HSP70_peptide-bd_sf"/>
</dbReference>
<dbReference type="InterPro" id="IPR013126">
    <property type="entry name" value="Hsp_70_fam"/>
</dbReference>
<dbReference type="InterPro" id="IPR010236">
    <property type="entry name" value="ISC_FeS_clus_asmbl_HscA"/>
</dbReference>
<dbReference type="NCBIfam" id="TIGR01991">
    <property type="entry name" value="HscA"/>
    <property type="match status" value="1"/>
</dbReference>
<dbReference type="NCBIfam" id="NF003520">
    <property type="entry name" value="PRK05183.1"/>
    <property type="match status" value="1"/>
</dbReference>
<dbReference type="PANTHER" id="PTHR19375">
    <property type="entry name" value="HEAT SHOCK PROTEIN 70KDA"/>
    <property type="match status" value="1"/>
</dbReference>
<dbReference type="Pfam" id="PF00012">
    <property type="entry name" value="HSP70"/>
    <property type="match status" value="1"/>
</dbReference>
<dbReference type="PRINTS" id="PR00301">
    <property type="entry name" value="HEATSHOCK70"/>
</dbReference>
<dbReference type="SUPFAM" id="SSF53067">
    <property type="entry name" value="Actin-like ATPase domain"/>
    <property type="match status" value="2"/>
</dbReference>
<dbReference type="SUPFAM" id="SSF100934">
    <property type="entry name" value="Heat shock protein 70kD (HSP70), C-terminal subdomain"/>
    <property type="match status" value="1"/>
</dbReference>
<dbReference type="SUPFAM" id="SSF100920">
    <property type="entry name" value="Heat shock protein 70kD (HSP70), peptide-binding domain"/>
    <property type="match status" value="1"/>
</dbReference>
<dbReference type="PROSITE" id="PS00297">
    <property type="entry name" value="HSP70_1"/>
    <property type="match status" value="1"/>
</dbReference>
<dbReference type="PROSITE" id="PS00329">
    <property type="entry name" value="HSP70_2"/>
    <property type="match status" value="1"/>
</dbReference>
<dbReference type="PROSITE" id="PS01036">
    <property type="entry name" value="HSP70_3"/>
    <property type="match status" value="1"/>
</dbReference>
<evidence type="ECO:0000255" key="1">
    <source>
        <dbReference type="HAMAP-Rule" id="MF_00679"/>
    </source>
</evidence>
<name>HSCA_YERE8</name>
<sequence>MALLQISEPGLTAAPHQRRLAAGIDLGTTNSLVATVRSGKAQTLADEQLRDLLPSVVHYQQNNIDVGWNARDLAALDPVNTISSVKRMMGRSLADIVQRYPNLPYQFQPSENGLPMIQTASGLVNPVQVSADILKALAQRARAALEGELDGVVITVPAYFDDAQRQGTKDAARLAGLHVLRLLNEPTAAAIAYGLDSGQEGVIAVYDLGGGTFDISILRLSRGVFEVLATGGDSALGGDDFDHLLADWLREQAGIDSRDDHGVQRQLLDAAIAAKITLSDAEVADVSVAGWQGQITREQFESLIVSLVKRTLMACRRALKDAGVTADEVLEVVMVGGSTRVPLVREQVGQFFGRTPLTSIDPDKVVAIGAAIQADILVGNKPDSDMLLLDVIPLSLGLETMGGLVEKVIPRNTTIPVARAQEFTTFKDGQSAMTIHVLQGERELVQDCRSLARFALRGLPPLPAGGAHIRVTFQVDADGLLSVTAMEKSTGVEASIQVKPSYGLSDDEIANMIKDSMANAQSDIGARKLAEQQVEASRVLESLQGALAEDAALLSEQESTAIAQAMAALQQQMQGTDPHAIEAAIKALDAQTQDFAARRMDASIRRALAGHSVDEV</sequence>
<feature type="chain" id="PRO_1000044903" description="Chaperone protein HscA">
    <location>
        <begin position="1"/>
        <end position="616"/>
    </location>
</feature>
<accession>A1JKQ7</accession>
<organism>
    <name type="scientific">Yersinia enterocolitica serotype O:8 / biotype 1B (strain NCTC 13174 / 8081)</name>
    <dbReference type="NCBI Taxonomy" id="393305"/>
    <lineage>
        <taxon>Bacteria</taxon>
        <taxon>Pseudomonadati</taxon>
        <taxon>Pseudomonadota</taxon>
        <taxon>Gammaproteobacteria</taxon>
        <taxon>Enterobacterales</taxon>
        <taxon>Yersiniaceae</taxon>
        <taxon>Yersinia</taxon>
    </lineage>
</organism>
<protein>
    <recommendedName>
        <fullName evidence="1">Chaperone protein HscA</fullName>
    </recommendedName>
    <alternativeName>
        <fullName evidence="1">Hsc66</fullName>
    </alternativeName>
</protein>
<proteinExistence type="inferred from homology"/>